<feature type="chain" id="PRO_0000121036" description="COP9 signalosome complex subunit 12">
    <location>
        <begin position="1"/>
        <end position="412"/>
    </location>
</feature>
<feature type="domain" description="PCI" evidence="2">
    <location>
        <begin position="220"/>
        <end position="401"/>
    </location>
</feature>
<protein>
    <recommendedName>
        <fullName>COP9 signalosome complex subunit 12</fullName>
    </recommendedName>
</protein>
<accession>Q75BU2</accession>
<organism>
    <name type="scientific">Eremothecium gossypii (strain ATCC 10895 / CBS 109.51 / FGSC 9923 / NRRL Y-1056)</name>
    <name type="common">Yeast</name>
    <name type="synonym">Ashbya gossypii</name>
    <dbReference type="NCBI Taxonomy" id="284811"/>
    <lineage>
        <taxon>Eukaryota</taxon>
        <taxon>Fungi</taxon>
        <taxon>Dikarya</taxon>
        <taxon>Ascomycota</taxon>
        <taxon>Saccharomycotina</taxon>
        <taxon>Saccharomycetes</taxon>
        <taxon>Saccharomycetales</taxon>
        <taxon>Saccharomycetaceae</taxon>
        <taxon>Eremothecium</taxon>
    </lineage>
</organism>
<keyword id="KW-0963">Cytoplasm</keyword>
<keyword id="KW-0539">Nucleus</keyword>
<keyword id="KW-1185">Reference proteome</keyword>
<keyword id="KW-0736">Signalosome</keyword>
<comment type="function">
    <text evidence="1">Component of the COP9 signalosome (CSN) complex that acts as an regulator of the ubiquitin (Ubl) conjugation pathway by mediating the deneddylation of the cullin subunit of SCF-type E3 ubiquitin-protein ligase complexes. The CSN complex is involved in the regulation of the mating pheromone response (By similarity).</text>
</comment>
<comment type="subunit">
    <text>Component of a COP9 signalosome-like (CSN) complex.</text>
</comment>
<comment type="subcellular location">
    <subcellularLocation>
        <location evidence="1">Cytoplasm</location>
    </subcellularLocation>
    <subcellularLocation>
        <location evidence="1">Nucleus</location>
    </subcellularLocation>
</comment>
<comment type="similarity">
    <text evidence="3">Belongs to the CSN12 family.</text>
</comment>
<evidence type="ECO:0000250" key="1"/>
<evidence type="ECO:0000255" key="2">
    <source>
        <dbReference type="PROSITE-ProRule" id="PRU01185"/>
    </source>
</evidence>
<evidence type="ECO:0000305" key="3"/>
<gene>
    <name type="primary">CSN12</name>
    <name type="ordered locus">ACR179C</name>
</gene>
<sequence>MIQAVTSCFQFKRCTTHLLEFIAADKPMVGDALADPSDEKLAHFVRTTAALKIEYRCAQGPSPRVFELALAQLRALNRIAEWESGWVVYPLYTCARQLVQMAAALDARTERAAEAAQCGDLATEDHLTQCGRAVHMSLNLCLKDRDPAASNKRHGAYYFALLLFRTYARLGAHSLVTNMVKVLESRAQDLPPVERAFGERRALTVTYCYYLGRYHACRRADYEKGFRWLNTALLTCHRDHTRHHQLILTYLVPVAFLARRWYPKHHVIAAWPPPQDPAAIHYAALVAALRSGDLGLYDRELVRMQLPLLRRGLYLPLSHLRPYILLRLVKAVWRLSGGSSQLPIRIIAAALAYSTSATPDAGGERLLDHTECLLANLIARGYVKGYLSHGNRVLVVSRTEPFPRLVRSETAA</sequence>
<dbReference type="EMBL" id="AE016816">
    <property type="protein sequence ID" value="AAS51405.2"/>
    <property type="molecule type" value="Genomic_DNA"/>
</dbReference>
<dbReference type="RefSeq" id="NP_983581.2">
    <property type="nucleotide sequence ID" value="NM_208934.2"/>
</dbReference>
<dbReference type="SMR" id="Q75BU2"/>
<dbReference type="FunCoup" id="Q75BU2">
    <property type="interactions" value="959"/>
</dbReference>
<dbReference type="STRING" id="284811.Q75BU2"/>
<dbReference type="EnsemblFungi" id="AAS51405">
    <property type="protein sequence ID" value="AAS51405"/>
    <property type="gene ID" value="AGOS_ACR179C"/>
</dbReference>
<dbReference type="GeneID" id="4619713"/>
<dbReference type="KEGG" id="ago:AGOS_ACR179C"/>
<dbReference type="eggNOG" id="KOG2688">
    <property type="taxonomic scope" value="Eukaryota"/>
</dbReference>
<dbReference type="HOGENOM" id="CLU_031567_2_1_1"/>
<dbReference type="InParanoid" id="Q75BU2"/>
<dbReference type="OMA" id="ESQTNWI"/>
<dbReference type="OrthoDB" id="10252687at2759"/>
<dbReference type="Proteomes" id="UP000000591">
    <property type="component" value="Chromosome III"/>
</dbReference>
<dbReference type="GO" id="GO:0008180">
    <property type="term" value="C:COP9 signalosome"/>
    <property type="evidence" value="ECO:0007669"/>
    <property type="project" value="UniProtKB-KW"/>
</dbReference>
<dbReference type="GO" id="GO:0005737">
    <property type="term" value="C:cytoplasm"/>
    <property type="evidence" value="ECO:0007669"/>
    <property type="project" value="UniProtKB-SubCell"/>
</dbReference>
<dbReference type="GO" id="GO:0000791">
    <property type="term" value="C:euchromatin"/>
    <property type="evidence" value="ECO:0007669"/>
    <property type="project" value="EnsemblFungi"/>
</dbReference>
<dbReference type="GO" id="GO:0003690">
    <property type="term" value="F:double-stranded DNA binding"/>
    <property type="evidence" value="ECO:0000318"/>
    <property type="project" value="GO_Central"/>
</dbReference>
<dbReference type="GO" id="GO:0003723">
    <property type="term" value="F:RNA binding"/>
    <property type="evidence" value="ECO:0000318"/>
    <property type="project" value="GO_Central"/>
</dbReference>
<dbReference type="GO" id="GO:0071444">
    <property type="term" value="P:cellular response to pheromone"/>
    <property type="evidence" value="ECO:0007669"/>
    <property type="project" value="EnsemblFungi"/>
</dbReference>
<dbReference type="GO" id="GO:0000747">
    <property type="term" value="P:conjugation with cellular fusion"/>
    <property type="evidence" value="ECO:0007669"/>
    <property type="project" value="EnsemblFungi"/>
</dbReference>
<dbReference type="GO" id="GO:0000398">
    <property type="term" value="P:mRNA splicing, via spliceosome"/>
    <property type="evidence" value="ECO:0007669"/>
    <property type="project" value="EnsemblFungi"/>
</dbReference>
<dbReference type="Gene3D" id="1.10.10.10">
    <property type="entry name" value="Winged helix-like DNA-binding domain superfamily/Winged helix DNA-binding domain"/>
    <property type="match status" value="1"/>
</dbReference>
<dbReference type="InterPro" id="IPR045114">
    <property type="entry name" value="Csn12-like"/>
</dbReference>
<dbReference type="InterPro" id="IPR000717">
    <property type="entry name" value="PCI_dom"/>
</dbReference>
<dbReference type="InterPro" id="IPR036388">
    <property type="entry name" value="WH-like_DNA-bd_sf"/>
</dbReference>
<dbReference type="PANTHER" id="PTHR12732:SF0">
    <property type="entry name" value="PCI DOMAIN-CONTAINING PROTEIN 2"/>
    <property type="match status" value="1"/>
</dbReference>
<dbReference type="PANTHER" id="PTHR12732">
    <property type="entry name" value="UNCHARACTERIZED PROTEASOME COMPONENT REGION PCI-CONTAINING"/>
    <property type="match status" value="1"/>
</dbReference>
<dbReference type="Pfam" id="PF01399">
    <property type="entry name" value="PCI"/>
    <property type="match status" value="1"/>
</dbReference>
<dbReference type="SMART" id="SM00753">
    <property type="entry name" value="PAM"/>
    <property type="match status" value="1"/>
</dbReference>
<dbReference type="PROSITE" id="PS50250">
    <property type="entry name" value="PCI"/>
    <property type="match status" value="1"/>
</dbReference>
<proteinExistence type="inferred from homology"/>
<reference key="1">
    <citation type="journal article" date="2004" name="Science">
        <title>The Ashbya gossypii genome as a tool for mapping the ancient Saccharomyces cerevisiae genome.</title>
        <authorList>
            <person name="Dietrich F.S."/>
            <person name="Voegeli S."/>
            <person name="Brachat S."/>
            <person name="Lerch A."/>
            <person name="Gates K."/>
            <person name="Steiner S."/>
            <person name="Mohr C."/>
            <person name="Poehlmann R."/>
            <person name="Luedi P."/>
            <person name="Choi S."/>
            <person name="Wing R.A."/>
            <person name="Flavier A."/>
            <person name="Gaffney T.D."/>
            <person name="Philippsen P."/>
        </authorList>
    </citation>
    <scope>NUCLEOTIDE SEQUENCE [LARGE SCALE GENOMIC DNA]</scope>
    <source>
        <strain>ATCC 10895 / CBS 109.51 / FGSC 9923 / NRRL Y-1056</strain>
    </source>
</reference>
<reference key="2">
    <citation type="journal article" date="2013" name="G3 (Bethesda)">
        <title>Genomes of Ashbya fungi isolated from insects reveal four mating-type loci, numerous translocations, lack of transposons, and distinct gene duplications.</title>
        <authorList>
            <person name="Dietrich F.S."/>
            <person name="Voegeli S."/>
            <person name="Kuo S."/>
            <person name="Philippsen P."/>
        </authorList>
    </citation>
    <scope>GENOME REANNOTATION</scope>
    <scope>SEQUENCE REVISION TO 273-274; 284-286; 290-296 AND 318-326</scope>
    <source>
        <strain>ATCC 10895 / CBS 109.51 / FGSC 9923 / NRRL Y-1056</strain>
    </source>
</reference>
<name>CSN12_EREGS</name>